<name>NTPP_HELPG</name>
<organism>
    <name type="scientific">Helicobacter pylori (strain G27)</name>
    <dbReference type="NCBI Taxonomy" id="563041"/>
    <lineage>
        <taxon>Bacteria</taxon>
        <taxon>Pseudomonadati</taxon>
        <taxon>Campylobacterota</taxon>
        <taxon>Epsilonproteobacteria</taxon>
        <taxon>Campylobacterales</taxon>
        <taxon>Helicobacteraceae</taxon>
        <taxon>Helicobacter</taxon>
    </lineage>
</organism>
<accession>B5Z8N5</accession>
<sequence length="190" mass="21287">MELILGSQSSARANLLKEHGIKFEQKALYFDEESLKTTDPREFVYLACKGKLEKAKKLLTNHCVIVVADSVVSVDNRMQRKAKNKQEALEFLKRQNGNEIEVLTCSALISPVLEWLDLSVFRARLKAFDSSEIEKYLESGLWQESAGCVRLEDFHRPYIKSSSKNLSVGLGLNVEGLLGALKLGAKLSLL</sequence>
<proteinExistence type="inferred from homology"/>
<comment type="function">
    <text evidence="1">Nucleoside triphosphate pyrophosphatase. May have a dual role in cell division arrest and in preventing the incorporation of modified nucleotides into cellular nucleic acids.</text>
</comment>
<comment type="catalytic activity">
    <reaction evidence="1">
        <text>a ribonucleoside 5'-triphosphate + H2O = a ribonucleoside 5'-phosphate + diphosphate + H(+)</text>
        <dbReference type="Rhea" id="RHEA:23996"/>
        <dbReference type="ChEBI" id="CHEBI:15377"/>
        <dbReference type="ChEBI" id="CHEBI:15378"/>
        <dbReference type="ChEBI" id="CHEBI:33019"/>
        <dbReference type="ChEBI" id="CHEBI:58043"/>
        <dbReference type="ChEBI" id="CHEBI:61557"/>
        <dbReference type="EC" id="3.6.1.9"/>
    </reaction>
</comment>
<comment type="catalytic activity">
    <reaction evidence="1">
        <text>a 2'-deoxyribonucleoside 5'-triphosphate + H2O = a 2'-deoxyribonucleoside 5'-phosphate + diphosphate + H(+)</text>
        <dbReference type="Rhea" id="RHEA:44644"/>
        <dbReference type="ChEBI" id="CHEBI:15377"/>
        <dbReference type="ChEBI" id="CHEBI:15378"/>
        <dbReference type="ChEBI" id="CHEBI:33019"/>
        <dbReference type="ChEBI" id="CHEBI:61560"/>
        <dbReference type="ChEBI" id="CHEBI:65317"/>
        <dbReference type="EC" id="3.6.1.9"/>
    </reaction>
</comment>
<comment type="cofactor">
    <cofactor evidence="1">
        <name>a divalent metal cation</name>
        <dbReference type="ChEBI" id="CHEBI:60240"/>
    </cofactor>
</comment>
<comment type="subcellular location">
    <subcellularLocation>
        <location evidence="1">Cytoplasm</location>
    </subcellularLocation>
</comment>
<comment type="similarity">
    <text evidence="1">Belongs to the Maf family.</text>
</comment>
<protein>
    <recommendedName>
        <fullName evidence="1">Nucleoside triphosphate pyrophosphatase</fullName>
        <ecNumber evidence="1">3.6.1.9</ecNumber>
    </recommendedName>
    <alternativeName>
        <fullName evidence="1">Nucleotide pyrophosphatase</fullName>
        <shortName evidence="1">Nucleotide PPase</shortName>
    </alternativeName>
</protein>
<reference key="1">
    <citation type="journal article" date="2009" name="J. Bacteriol.">
        <title>The complete genome sequence of Helicobacter pylori strain G27.</title>
        <authorList>
            <person name="Baltrus D.A."/>
            <person name="Amieva M.R."/>
            <person name="Covacci A."/>
            <person name="Lowe T.M."/>
            <person name="Merrell D.S."/>
            <person name="Ottemann K.M."/>
            <person name="Stein M."/>
            <person name="Salama N.R."/>
            <person name="Guillemin K."/>
        </authorList>
    </citation>
    <scope>NUCLEOTIDE SEQUENCE [LARGE SCALE GENOMIC DNA]</scope>
    <source>
        <strain>G27</strain>
    </source>
</reference>
<dbReference type="EC" id="3.6.1.9" evidence="1"/>
<dbReference type="EMBL" id="CP001173">
    <property type="protein sequence ID" value="ACI27934.1"/>
    <property type="molecule type" value="Genomic_DNA"/>
</dbReference>
<dbReference type="SMR" id="B5Z8N5"/>
<dbReference type="KEGG" id="hpg:HPG27_1184"/>
<dbReference type="HOGENOM" id="CLU_040416_2_2_7"/>
<dbReference type="Proteomes" id="UP000001735">
    <property type="component" value="Chromosome"/>
</dbReference>
<dbReference type="GO" id="GO:0005737">
    <property type="term" value="C:cytoplasm"/>
    <property type="evidence" value="ECO:0007669"/>
    <property type="project" value="UniProtKB-SubCell"/>
</dbReference>
<dbReference type="GO" id="GO:0047429">
    <property type="term" value="F:nucleoside triphosphate diphosphatase activity"/>
    <property type="evidence" value="ECO:0007669"/>
    <property type="project" value="UniProtKB-EC"/>
</dbReference>
<dbReference type="GO" id="GO:0009117">
    <property type="term" value="P:nucleotide metabolic process"/>
    <property type="evidence" value="ECO:0007669"/>
    <property type="project" value="UniProtKB-KW"/>
</dbReference>
<dbReference type="FunFam" id="3.90.950.10:FF:000013">
    <property type="entry name" value="Nucleoside triphosphate pyrophosphatase"/>
    <property type="match status" value="1"/>
</dbReference>
<dbReference type="Gene3D" id="3.90.950.10">
    <property type="match status" value="1"/>
</dbReference>
<dbReference type="HAMAP" id="MF_00528">
    <property type="entry name" value="Maf"/>
    <property type="match status" value="1"/>
</dbReference>
<dbReference type="InterPro" id="IPR029001">
    <property type="entry name" value="ITPase-like_fam"/>
</dbReference>
<dbReference type="InterPro" id="IPR003697">
    <property type="entry name" value="Maf-like"/>
</dbReference>
<dbReference type="NCBIfam" id="TIGR00172">
    <property type="entry name" value="maf"/>
    <property type="match status" value="1"/>
</dbReference>
<dbReference type="NCBIfam" id="NF003141">
    <property type="entry name" value="PRK04056.1"/>
    <property type="match status" value="1"/>
</dbReference>
<dbReference type="PANTHER" id="PTHR43213">
    <property type="entry name" value="BIFUNCTIONAL DTTP/UTP PYROPHOSPHATASE/METHYLTRANSFERASE PROTEIN-RELATED"/>
    <property type="match status" value="1"/>
</dbReference>
<dbReference type="PANTHER" id="PTHR43213:SF5">
    <property type="entry name" value="BIFUNCTIONAL DTTP_UTP PYROPHOSPHATASE_METHYLTRANSFERASE PROTEIN-RELATED"/>
    <property type="match status" value="1"/>
</dbReference>
<dbReference type="Pfam" id="PF02545">
    <property type="entry name" value="Maf"/>
    <property type="match status" value="1"/>
</dbReference>
<dbReference type="PIRSF" id="PIRSF006305">
    <property type="entry name" value="Maf"/>
    <property type="match status" value="1"/>
</dbReference>
<dbReference type="SUPFAM" id="SSF52972">
    <property type="entry name" value="ITPase-like"/>
    <property type="match status" value="1"/>
</dbReference>
<evidence type="ECO:0000255" key="1">
    <source>
        <dbReference type="HAMAP-Rule" id="MF_00528"/>
    </source>
</evidence>
<feature type="chain" id="PRO_1000127788" description="Nucleoside triphosphate pyrophosphatase">
    <location>
        <begin position="1"/>
        <end position="190"/>
    </location>
</feature>
<feature type="active site" description="Proton acceptor" evidence="1">
    <location>
        <position position="69"/>
    </location>
</feature>
<keyword id="KW-0963">Cytoplasm</keyword>
<keyword id="KW-0378">Hydrolase</keyword>
<keyword id="KW-0546">Nucleotide metabolism</keyword>
<keyword id="KW-1185">Reference proteome</keyword>
<gene>
    <name type="ordered locus">HPG27_1184</name>
</gene>